<organism>
    <name type="scientific">Clostridium novyi (strain NT)</name>
    <dbReference type="NCBI Taxonomy" id="386415"/>
    <lineage>
        <taxon>Bacteria</taxon>
        <taxon>Bacillati</taxon>
        <taxon>Bacillota</taxon>
        <taxon>Clostridia</taxon>
        <taxon>Eubacteriales</taxon>
        <taxon>Clostridiaceae</taxon>
        <taxon>Clostridium</taxon>
    </lineage>
</organism>
<sequence>MLKIILIHIIKFYRKYISPLKKPCCRFYPTCSKYALDAINKYGAFKGSIMAIKRILRCHPFNPGGYDPVK</sequence>
<reference key="1">
    <citation type="journal article" date="2006" name="Nat. Biotechnol.">
        <title>The genome and transcriptomes of the anti-tumor agent Clostridium novyi-NT.</title>
        <authorList>
            <person name="Bettegowda C."/>
            <person name="Huang X."/>
            <person name="Lin J."/>
            <person name="Cheong I."/>
            <person name="Kohli M."/>
            <person name="Szabo S.A."/>
            <person name="Zhang X."/>
            <person name="Diaz L.A. Jr."/>
            <person name="Velculescu V.E."/>
            <person name="Parmigiani G."/>
            <person name="Kinzler K.W."/>
            <person name="Vogelstein B."/>
            <person name="Zhou S."/>
        </authorList>
    </citation>
    <scope>NUCLEOTIDE SEQUENCE [LARGE SCALE GENOMIC DNA]</scope>
    <source>
        <strain>NT</strain>
    </source>
</reference>
<evidence type="ECO:0000255" key="1">
    <source>
        <dbReference type="HAMAP-Rule" id="MF_00386"/>
    </source>
</evidence>
<keyword id="KW-1003">Cell membrane</keyword>
<keyword id="KW-0472">Membrane</keyword>
<keyword id="KW-1185">Reference proteome</keyword>
<feature type="chain" id="PRO_1000013084" description="Putative membrane protein insertion efficiency factor">
    <location>
        <begin position="1"/>
        <end position="70"/>
    </location>
</feature>
<name>YIDD_CLONN</name>
<gene>
    <name type="ordered locus">NT01CX_0870</name>
</gene>
<protein>
    <recommendedName>
        <fullName evidence="1">Putative membrane protein insertion efficiency factor</fullName>
    </recommendedName>
</protein>
<proteinExistence type="inferred from homology"/>
<dbReference type="EMBL" id="CP000382">
    <property type="protein sequence ID" value="ABK61013.1"/>
    <property type="molecule type" value="Genomic_DNA"/>
</dbReference>
<dbReference type="STRING" id="386415.NT01CX_0870"/>
<dbReference type="KEGG" id="cno:NT01CX_0870"/>
<dbReference type="eggNOG" id="COG0759">
    <property type="taxonomic scope" value="Bacteria"/>
</dbReference>
<dbReference type="HOGENOM" id="CLU_144811_6_0_9"/>
<dbReference type="Proteomes" id="UP000008220">
    <property type="component" value="Chromosome"/>
</dbReference>
<dbReference type="GO" id="GO:0005886">
    <property type="term" value="C:plasma membrane"/>
    <property type="evidence" value="ECO:0007669"/>
    <property type="project" value="UniProtKB-SubCell"/>
</dbReference>
<dbReference type="HAMAP" id="MF_00386">
    <property type="entry name" value="UPF0161_YidD"/>
    <property type="match status" value="1"/>
</dbReference>
<dbReference type="InterPro" id="IPR002696">
    <property type="entry name" value="Membr_insert_effic_factor_YidD"/>
</dbReference>
<dbReference type="NCBIfam" id="TIGR00278">
    <property type="entry name" value="membrane protein insertion efficiency factor YidD"/>
    <property type="match status" value="1"/>
</dbReference>
<dbReference type="PANTHER" id="PTHR33383">
    <property type="entry name" value="MEMBRANE PROTEIN INSERTION EFFICIENCY FACTOR-RELATED"/>
    <property type="match status" value="1"/>
</dbReference>
<dbReference type="PANTHER" id="PTHR33383:SF1">
    <property type="entry name" value="MEMBRANE PROTEIN INSERTION EFFICIENCY FACTOR-RELATED"/>
    <property type="match status" value="1"/>
</dbReference>
<dbReference type="Pfam" id="PF01809">
    <property type="entry name" value="YidD"/>
    <property type="match status" value="1"/>
</dbReference>
<dbReference type="SMART" id="SM01234">
    <property type="entry name" value="Haemolytic"/>
    <property type="match status" value="1"/>
</dbReference>
<accession>A0PX74</accession>
<comment type="function">
    <text evidence="1">Could be involved in insertion of integral membrane proteins into the membrane.</text>
</comment>
<comment type="subcellular location">
    <subcellularLocation>
        <location evidence="1">Cell membrane</location>
        <topology evidence="1">Peripheral membrane protein</topology>
        <orientation evidence="1">Cytoplasmic side</orientation>
    </subcellularLocation>
</comment>
<comment type="similarity">
    <text evidence="1">Belongs to the UPF0161 family.</text>
</comment>